<dbReference type="EC" id="2.7.2.8" evidence="1"/>
<dbReference type="EMBL" id="CP000151">
    <property type="protein sequence ID" value="ABB10041.1"/>
    <property type="molecule type" value="Genomic_DNA"/>
</dbReference>
<dbReference type="RefSeq" id="WP_006490510.1">
    <property type="nucleotide sequence ID" value="NZ_LDWP01000058.1"/>
</dbReference>
<dbReference type="SMR" id="Q39BX5"/>
<dbReference type="GeneID" id="98103597"/>
<dbReference type="KEGG" id="bur:Bcep18194_A6447"/>
<dbReference type="HOGENOM" id="CLU_053680_0_0_4"/>
<dbReference type="UniPathway" id="UPA00068">
    <property type="reaction ID" value="UER00107"/>
</dbReference>
<dbReference type="Proteomes" id="UP000002705">
    <property type="component" value="Chromosome 1"/>
</dbReference>
<dbReference type="GO" id="GO:0005737">
    <property type="term" value="C:cytoplasm"/>
    <property type="evidence" value="ECO:0007669"/>
    <property type="project" value="UniProtKB-SubCell"/>
</dbReference>
<dbReference type="GO" id="GO:0003991">
    <property type="term" value="F:acetylglutamate kinase activity"/>
    <property type="evidence" value="ECO:0007669"/>
    <property type="project" value="UniProtKB-UniRule"/>
</dbReference>
<dbReference type="GO" id="GO:0005524">
    <property type="term" value="F:ATP binding"/>
    <property type="evidence" value="ECO:0007669"/>
    <property type="project" value="UniProtKB-UniRule"/>
</dbReference>
<dbReference type="GO" id="GO:0042450">
    <property type="term" value="P:arginine biosynthetic process via ornithine"/>
    <property type="evidence" value="ECO:0007669"/>
    <property type="project" value="UniProtKB-UniRule"/>
</dbReference>
<dbReference type="GO" id="GO:0006526">
    <property type="term" value="P:L-arginine biosynthetic process"/>
    <property type="evidence" value="ECO:0007669"/>
    <property type="project" value="UniProtKB-UniPathway"/>
</dbReference>
<dbReference type="CDD" id="cd04250">
    <property type="entry name" value="AAK_NAGK-C"/>
    <property type="match status" value="1"/>
</dbReference>
<dbReference type="FunFam" id="3.40.1160.10:FF:000004">
    <property type="entry name" value="Acetylglutamate kinase"/>
    <property type="match status" value="1"/>
</dbReference>
<dbReference type="Gene3D" id="3.40.1160.10">
    <property type="entry name" value="Acetylglutamate kinase-like"/>
    <property type="match status" value="1"/>
</dbReference>
<dbReference type="HAMAP" id="MF_00082">
    <property type="entry name" value="ArgB"/>
    <property type="match status" value="1"/>
</dbReference>
<dbReference type="InterPro" id="IPR036393">
    <property type="entry name" value="AceGlu_kinase-like_sf"/>
</dbReference>
<dbReference type="InterPro" id="IPR004662">
    <property type="entry name" value="AcgluKinase_fam"/>
</dbReference>
<dbReference type="InterPro" id="IPR037528">
    <property type="entry name" value="ArgB"/>
</dbReference>
<dbReference type="InterPro" id="IPR001048">
    <property type="entry name" value="Asp/Glu/Uridylate_kinase"/>
</dbReference>
<dbReference type="InterPro" id="IPR041727">
    <property type="entry name" value="NAGK-C"/>
</dbReference>
<dbReference type="NCBIfam" id="TIGR00761">
    <property type="entry name" value="argB"/>
    <property type="match status" value="1"/>
</dbReference>
<dbReference type="PANTHER" id="PTHR23342">
    <property type="entry name" value="N-ACETYLGLUTAMATE SYNTHASE"/>
    <property type="match status" value="1"/>
</dbReference>
<dbReference type="PANTHER" id="PTHR23342:SF0">
    <property type="entry name" value="N-ACETYLGLUTAMATE SYNTHASE, MITOCHONDRIAL"/>
    <property type="match status" value="1"/>
</dbReference>
<dbReference type="Pfam" id="PF00696">
    <property type="entry name" value="AA_kinase"/>
    <property type="match status" value="1"/>
</dbReference>
<dbReference type="PIRSF" id="PIRSF000728">
    <property type="entry name" value="NAGK"/>
    <property type="match status" value="1"/>
</dbReference>
<dbReference type="SUPFAM" id="SSF53633">
    <property type="entry name" value="Carbamate kinase-like"/>
    <property type="match status" value="1"/>
</dbReference>
<keyword id="KW-0028">Amino-acid biosynthesis</keyword>
<keyword id="KW-0055">Arginine biosynthesis</keyword>
<keyword id="KW-0067">ATP-binding</keyword>
<keyword id="KW-0963">Cytoplasm</keyword>
<keyword id="KW-0418">Kinase</keyword>
<keyword id="KW-0547">Nucleotide-binding</keyword>
<keyword id="KW-0808">Transferase</keyword>
<evidence type="ECO:0000255" key="1">
    <source>
        <dbReference type="HAMAP-Rule" id="MF_00082"/>
    </source>
</evidence>
<sequence>MSEPIDLSQIAPTLKAEILAEALPYIRRYHGKTVVIKYGGNAMTEERLKQGFARDVILLKLVGINPVIVHGGGPQIDHALKKIGKAGTFIQGMRVTDEETMEVVEWVLGGEVQQDIVMLINHFGGHAVGLTGKDGGLIHARKLLMPDRDNPGQYIDIGQVGEVEAINPAVVKALQDDAFIPVISPIGFGEDGLSYNINADLVAGKLATVLNAEKLLMMTNIPGVMDKDGNLLTDLSAREIDALFEDGTISGGMLPKISSALDAAKSGVKSVHIVDGRIEHSVLLEILTEQPFGTMIRSH</sequence>
<name>ARGB_BURL3</name>
<comment type="function">
    <text evidence="1">Catalyzes the ATP-dependent phosphorylation of N-acetyl-L-glutamate.</text>
</comment>
<comment type="catalytic activity">
    <reaction evidence="1">
        <text>N-acetyl-L-glutamate + ATP = N-acetyl-L-glutamyl 5-phosphate + ADP</text>
        <dbReference type="Rhea" id="RHEA:14629"/>
        <dbReference type="ChEBI" id="CHEBI:30616"/>
        <dbReference type="ChEBI" id="CHEBI:44337"/>
        <dbReference type="ChEBI" id="CHEBI:57936"/>
        <dbReference type="ChEBI" id="CHEBI:456216"/>
        <dbReference type="EC" id="2.7.2.8"/>
    </reaction>
</comment>
<comment type="pathway">
    <text evidence="1">Amino-acid biosynthesis; L-arginine biosynthesis; N(2)-acetyl-L-ornithine from L-glutamate: step 2/4.</text>
</comment>
<comment type="subcellular location">
    <subcellularLocation>
        <location evidence="1">Cytoplasm</location>
    </subcellularLocation>
</comment>
<comment type="similarity">
    <text evidence="1">Belongs to the acetylglutamate kinase family. ArgB subfamily.</text>
</comment>
<proteinExistence type="inferred from homology"/>
<protein>
    <recommendedName>
        <fullName evidence="1">Acetylglutamate kinase</fullName>
        <ecNumber evidence="1">2.7.2.8</ecNumber>
    </recommendedName>
    <alternativeName>
        <fullName evidence="1">N-acetyl-L-glutamate 5-phosphotransferase</fullName>
    </alternativeName>
    <alternativeName>
        <fullName evidence="1">NAG kinase</fullName>
        <shortName evidence="1">NAGK</shortName>
    </alternativeName>
</protein>
<reference key="1">
    <citation type="submission" date="2005-10" db="EMBL/GenBank/DDBJ databases">
        <title>Complete sequence of chromosome 1 of Burkholderia sp. 383.</title>
        <authorList>
            <consortium name="US DOE Joint Genome Institute"/>
            <person name="Copeland A."/>
            <person name="Lucas S."/>
            <person name="Lapidus A."/>
            <person name="Barry K."/>
            <person name="Detter J.C."/>
            <person name="Glavina T."/>
            <person name="Hammon N."/>
            <person name="Israni S."/>
            <person name="Pitluck S."/>
            <person name="Chain P."/>
            <person name="Malfatti S."/>
            <person name="Shin M."/>
            <person name="Vergez L."/>
            <person name="Schmutz J."/>
            <person name="Larimer F."/>
            <person name="Land M."/>
            <person name="Kyrpides N."/>
            <person name="Lykidis A."/>
            <person name="Richardson P."/>
        </authorList>
    </citation>
    <scope>NUCLEOTIDE SEQUENCE [LARGE SCALE GENOMIC DNA]</scope>
    <source>
        <strain>ATCC 17760 / DSM 23089 / LMG 22485 / NCIMB 9086 / R18194 / 383</strain>
    </source>
</reference>
<organism>
    <name type="scientific">Burkholderia lata (strain ATCC 17760 / DSM 23089 / LMG 22485 / NCIMB 9086 / R18194 / 383)</name>
    <dbReference type="NCBI Taxonomy" id="482957"/>
    <lineage>
        <taxon>Bacteria</taxon>
        <taxon>Pseudomonadati</taxon>
        <taxon>Pseudomonadota</taxon>
        <taxon>Betaproteobacteria</taxon>
        <taxon>Burkholderiales</taxon>
        <taxon>Burkholderiaceae</taxon>
        <taxon>Burkholderia</taxon>
        <taxon>Burkholderia cepacia complex</taxon>
    </lineage>
</organism>
<feature type="chain" id="PRO_0000264688" description="Acetylglutamate kinase">
    <location>
        <begin position="1"/>
        <end position="299"/>
    </location>
</feature>
<feature type="binding site" evidence="1">
    <location>
        <begin position="72"/>
        <end position="73"/>
    </location>
    <ligand>
        <name>substrate</name>
    </ligand>
</feature>
<feature type="binding site" evidence="1">
    <location>
        <position position="94"/>
    </location>
    <ligand>
        <name>substrate</name>
    </ligand>
</feature>
<feature type="binding site" evidence="1">
    <location>
        <position position="196"/>
    </location>
    <ligand>
        <name>substrate</name>
    </ligand>
</feature>
<feature type="site" description="Transition state stabilizer" evidence="1">
    <location>
        <position position="37"/>
    </location>
</feature>
<feature type="site" description="Transition state stabilizer" evidence="1">
    <location>
        <position position="256"/>
    </location>
</feature>
<gene>
    <name evidence="1" type="primary">argB</name>
    <name type="ordered locus">Bcep18194_A6447</name>
</gene>
<accession>Q39BX5</accession>